<dbReference type="EMBL" id="CP000875">
    <property type="protein sequence ID" value="ABX07357.1"/>
    <property type="molecule type" value="Genomic_DNA"/>
</dbReference>
<dbReference type="SMR" id="A9B1H0"/>
<dbReference type="FunCoup" id="A9B1H0">
    <property type="interactions" value="475"/>
</dbReference>
<dbReference type="STRING" id="316274.Haur_4726"/>
<dbReference type="KEGG" id="hau:Haur_4726"/>
<dbReference type="eggNOG" id="COG0231">
    <property type="taxonomic scope" value="Bacteria"/>
</dbReference>
<dbReference type="HOGENOM" id="CLU_074944_0_1_0"/>
<dbReference type="InParanoid" id="A9B1H0"/>
<dbReference type="UniPathway" id="UPA00345"/>
<dbReference type="Proteomes" id="UP000000787">
    <property type="component" value="Chromosome"/>
</dbReference>
<dbReference type="GO" id="GO:0005737">
    <property type="term" value="C:cytoplasm"/>
    <property type="evidence" value="ECO:0007669"/>
    <property type="project" value="UniProtKB-SubCell"/>
</dbReference>
<dbReference type="GO" id="GO:0003746">
    <property type="term" value="F:translation elongation factor activity"/>
    <property type="evidence" value="ECO:0007669"/>
    <property type="project" value="UniProtKB-UniRule"/>
</dbReference>
<dbReference type="GO" id="GO:0043043">
    <property type="term" value="P:peptide biosynthetic process"/>
    <property type="evidence" value="ECO:0007669"/>
    <property type="project" value="InterPro"/>
</dbReference>
<dbReference type="CDD" id="cd04470">
    <property type="entry name" value="S1_EF-P_repeat_1"/>
    <property type="match status" value="1"/>
</dbReference>
<dbReference type="CDD" id="cd05794">
    <property type="entry name" value="S1_EF-P_repeat_2"/>
    <property type="match status" value="1"/>
</dbReference>
<dbReference type="FunFam" id="2.30.30.30:FF:000003">
    <property type="entry name" value="Elongation factor P"/>
    <property type="match status" value="1"/>
</dbReference>
<dbReference type="FunFam" id="2.40.50.140:FF:000004">
    <property type="entry name" value="Elongation factor P"/>
    <property type="match status" value="1"/>
</dbReference>
<dbReference type="FunFam" id="2.40.50.140:FF:000009">
    <property type="entry name" value="Elongation factor P"/>
    <property type="match status" value="1"/>
</dbReference>
<dbReference type="Gene3D" id="2.30.30.30">
    <property type="match status" value="1"/>
</dbReference>
<dbReference type="Gene3D" id="2.40.50.140">
    <property type="entry name" value="Nucleic acid-binding proteins"/>
    <property type="match status" value="2"/>
</dbReference>
<dbReference type="HAMAP" id="MF_00141">
    <property type="entry name" value="EF_P"/>
    <property type="match status" value="1"/>
</dbReference>
<dbReference type="InterPro" id="IPR015365">
    <property type="entry name" value="Elong-fact-P_C"/>
</dbReference>
<dbReference type="InterPro" id="IPR012340">
    <property type="entry name" value="NA-bd_OB-fold"/>
</dbReference>
<dbReference type="InterPro" id="IPR014722">
    <property type="entry name" value="Rib_uL2_dom2"/>
</dbReference>
<dbReference type="InterPro" id="IPR020599">
    <property type="entry name" value="Transl_elong_fac_P/YeiP"/>
</dbReference>
<dbReference type="InterPro" id="IPR013185">
    <property type="entry name" value="Transl_elong_KOW-like"/>
</dbReference>
<dbReference type="InterPro" id="IPR001059">
    <property type="entry name" value="Transl_elong_P/YeiP_cen"/>
</dbReference>
<dbReference type="InterPro" id="IPR013852">
    <property type="entry name" value="Transl_elong_P/YeiP_CS"/>
</dbReference>
<dbReference type="InterPro" id="IPR011768">
    <property type="entry name" value="Transl_elongation_fac_P"/>
</dbReference>
<dbReference type="InterPro" id="IPR008991">
    <property type="entry name" value="Translation_prot_SH3-like_sf"/>
</dbReference>
<dbReference type="NCBIfam" id="TIGR00038">
    <property type="entry name" value="efp"/>
    <property type="match status" value="1"/>
</dbReference>
<dbReference type="NCBIfam" id="NF001810">
    <property type="entry name" value="PRK00529.1"/>
    <property type="match status" value="1"/>
</dbReference>
<dbReference type="PANTHER" id="PTHR30053">
    <property type="entry name" value="ELONGATION FACTOR P"/>
    <property type="match status" value="1"/>
</dbReference>
<dbReference type="PANTHER" id="PTHR30053:SF12">
    <property type="entry name" value="ELONGATION FACTOR P (EF-P) FAMILY PROTEIN"/>
    <property type="match status" value="1"/>
</dbReference>
<dbReference type="Pfam" id="PF01132">
    <property type="entry name" value="EFP"/>
    <property type="match status" value="1"/>
</dbReference>
<dbReference type="Pfam" id="PF08207">
    <property type="entry name" value="EFP_N"/>
    <property type="match status" value="1"/>
</dbReference>
<dbReference type="Pfam" id="PF09285">
    <property type="entry name" value="Elong-fact-P_C"/>
    <property type="match status" value="1"/>
</dbReference>
<dbReference type="PIRSF" id="PIRSF005901">
    <property type="entry name" value="EF-P"/>
    <property type="match status" value="1"/>
</dbReference>
<dbReference type="SMART" id="SM01185">
    <property type="entry name" value="EFP"/>
    <property type="match status" value="1"/>
</dbReference>
<dbReference type="SMART" id="SM00841">
    <property type="entry name" value="Elong-fact-P_C"/>
    <property type="match status" value="1"/>
</dbReference>
<dbReference type="SUPFAM" id="SSF50249">
    <property type="entry name" value="Nucleic acid-binding proteins"/>
    <property type="match status" value="2"/>
</dbReference>
<dbReference type="SUPFAM" id="SSF50104">
    <property type="entry name" value="Translation proteins SH3-like domain"/>
    <property type="match status" value="1"/>
</dbReference>
<dbReference type="PROSITE" id="PS01275">
    <property type="entry name" value="EFP"/>
    <property type="match status" value="1"/>
</dbReference>
<comment type="function">
    <text evidence="1">Involved in peptide bond synthesis. Stimulates efficient translation and peptide-bond synthesis on native or reconstituted 70S ribosomes in vitro. Probably functions indirectly by altering the affinity of the ribosome for aminoacyl-tRNA, thus increasing their reactivity as acceptors for peptidyl transferase.</text>
</comment>
<comment type="pathway">
    <text evidence="1">Protein biosynthesis; polypeptide chain elongation.</text>
</comment>
<comment type="subcellular location">
    <subcellularLocation>
        <location evidence="1">Cytoplasm</location>
    </subcellularLocation>
</comment>
<comment type="similarity">
    <text evidence="1">Belongs to the elongation factor P family.</text>
</comment>
<reference key="1">
    <citation type="journal article" date="2011" name="Stand. Genomic Sci.">
        <title>Complete genome sequence of the filamentous gliding predatory bacterium Herpetosiphon aurantiacus type strain (114-95(T)).</title>
        <authorList>
            <person name="Kiss H."/>
            <person name="Nett M."/>
            <person name="Domin N."/>
            <person name="Martin K."/>
            <person name="Maresca J.A."/>
            <person name="Copeland A."/>
            <person name="Lapidus A."/>
            <person name="Lucas S."/>
            <person name="Berry K.W."/>
            <person name="Glavina Del Rio T."/>
            <person name="Dalin E."/>
            <person name="Tice H."/>
            <person name="Pitluck S."/>
            <person name="Richardson P."/>
            <person name="Bruce D."/>
            <person name="Goodwin L."/>
            <person name="Han C."/>
            <person name="Detter J.C."/>
            <person name="Schmutz J."/>
            <person name="Brettin T."/>
            <person name="Land M."/>
            <person name="Hauser L."/>
            <person name="Kyrpides N.C."/>
            <person name="Ivanova N."/>
            <person name="Goeker M."/>
            <person name="Woyke T."/>
            <person name="Klenk H.P."/>
            <person name="Bryant D.A."/>
        </authorList>
    </citation>
    <scope>NUCLEOTIDE SEQUENCE [LARGE SCALE GENOMIC DNA]</scope>
    <source>
        <strain>ATCC 23779 / DSM 785 / 114-95</strain>
    </source>
</reference>
<name>EFP_HERA2</name>
<sequence>MVSTGEVRKGLTLIIDGELFRVMEANHVKQGRGTAFLRLTLRNVRTSATTVKTFMAGERFEVARLSTRNVQYLYREDNYIYVMNTETYDQFPVSVDLLEDALLYIRENETFDVLTYEDEVLDISLPPSVEMVVVETEPNYKGDTASGGGKPATTDTGLVVQVPSFVAVGERIRVDTTNGKYITRI</sequence>
<gene>
    <name evidence="1" type="primary">efp</name>
    <name type="ordered locus">Haur_4726</name>
</gene>
<feature type="chain" id="PRO_1000096163" description="Elongation factor P">
    <location>
        <begin position="1"/>
        <end position="185"/>
    </location>
</feature>
<accession>A9B1H0</accession>
<keyword id="KW-0963">Cytoplasm</keyword>
<keyword id="KW-0251">Elongation factor</keyword>
<keyword id="KW-0648">Protein biosynthesis</keyword>
<evidence type="ECO:0000255" key="1">
    <source>
        <dbReference type="HAMAP-Rule" id="MF_00141"/>
    </source>
</evidence>
<proteinExistence type="inferred from homology"/>
<organism>
    <name type="scientific">Herpetosiphon aurantiacus (strain ATCC 23779 / DSM 785 / 114-95)</name>
    <dbReference type="NCBI Taxonomy" id="316274"/>
    <lineage>
        <taxon>Bacteria</taxon>
        <taxon>Bacillati</taxon>
        <taxon>Chloroflexota</taxon>
        <taxon>Chloroflexia</taxon>
        <taxon>Herpetosiphonales</taxon>
        <taxon>Herpetosiphonaceae</taxon>
        <taxon>Herpetosiphon</taxon>
    </lineage>
</organism>
<protein>
    <recommendedName>
        <fullName evidence="1">Elongation factor P</fullName>
        <shortName evidence="1">EF-P</shortName>
    </recommendedName>
</protein>